<keyword id="KW-0007">Acetylation</keyword>
<keyword id="KW-0456">Lyase</keyword>
<keyword id="KW-0663">Pyridoxal phosphate</keyword>
<keyword id="KW-0823">Tryptophan catabolism</keyword>
<sequence length="471" mass="52773">MENFKHLPEPFRIRVIEPVKRTTRAYREEAIIKSGMNPFLLDSEDVFIDLLTDSGTGAVTQSMQAAMMRGDEAYSGSRSYYALAESVKNIFGYQYTIPTHQGRGAEQIYIPVLIKKREQEKGLDRSKMVAFSNYFFDTTQGHSQINGCTVRNVYIKEAFDTGVRYDFKGNFDLEGLERGIEEVGPNNVPYIVATITSNSAGGQPVSLANLKAMYSIAKKYDIPVVMDSARFAENAYFIKQREAEYKDWTIEQITRETYKYADMLAMSAKKDAMVPMGGLLCMKDDSFFDVYTECRTLCVVQEGFPTYGGLEGGAMERLAVGLYDGMNLDWLAYRIAQVQYLVDGLEEIGVVCQQAGGHAAFVDAGKLLPHIPADQFPAQALACELYKVAGIRAVEIGSFLLGRDPKTGKQLPCPAELLRLTIPRATYTQTHMDFIIEAFKHVKENAANIKGLTFTYEPKVLRHFTAKLKEV</sequence>
<name>TNAA_SHIF8</name>
<feature type="chain" id="PRO_1000017734" description="Tryptophanase">
    <location>
        <begin position="1"/>
        <end position="471"/>
    </location>
</feature>
<feature type="modified residue" description="N6-acetyllysine" evidence="1">
    <location>
        <position position="5"/>
    </location>
</feature>
<feature type="modified residue" description="N6-acetyllysine" evidence="1">
    <location>
        <position position="115"/>
    </location>
</feature>
<feature type="modified residue" description="N6-acetyllysine" evidence="1">
    <location>
        <position position="156"/>
    </location>
</feature>
<feature type="modified residue" description="N6-(pyridoxal phosphate)lysine" evidence="1">
    <location>
        <position position="270"/>
    </location>
</feature>
<feature type="modified residue" description="N6-acetyllysine" evidence="1">
    <location>
        <position position="450"/>
    </location>
</feature>
<evidence type="ECO:0000255" key="1">
    <source>
        <dbReference type="HAMAP-Rule" id="MF_00544"/>
    </source>
</evidence>
<reference key="1">
    <citation type="journal article" date="2006" name="BMC Genomics">
        <title>Complete genome sequence of Shigella flexneri 5b and comparison with Shigella flexneri 2a.</title>
        <authorList>
            <person name="Nie H."/>
            <person name="Yang F."/>
            <person name="Zhang X."/>
            <person name="Yang J."/>
            <person name="Chen L."/>
            <person name="Wang J."/>
            <person name="Xiong Z."/>
            <person name="Peng J."/>
            <person name="Sun L."/>
            <person name="Dong J."/>
            <person name="Xue Y."/>
            <person name="Xu X."/>
            <person name="Chen S."/>
            <person name="Yao Z."/>
            <person name="Shen Y."/>
            <person name="Jin Q."/>
        </authorList>
    </citation>
    <scope>NUCLEOTIDE SEQUENCE [LARGE SCALE GENOMIC DNA]</scope>
    <source>
        <strain>8401</strain>
    </source>
</reference>
<organism>
    <name type="scientific">Shigella flexneri serotype 5b (strain 8401)</name>
    <dbReference type="NCBI Taxonomy" id="373384"/>
    <lineage>
        <taxon>Bacteria</taxon>
        <taxon>Pseudomonadati</taxon>
        <taxon>Pseudomonadota</taxon>
        <taxon>Gammaproteobacteria</taxon>
        <taxon>Enterobacterales</taxon>
        <taxon>Enterobacteriaceae</taxon>
        <taxon>Shigella</taxon>
    </lineage>
</organism>
<protein>
    <recommendedName>
        <fullName evidence="1">Tryptophanase</fullName>
        <ecNumber evidence="1">4.1.99.1</ecNumber>
    </recommendedName>
    <alternativeName>
        <fullName evidence="1">L-tryptophan indole-lyase</fullName>
        <shortName evidence="1">TNase</shortName>
    </alternativeName>
</protein>
<proteinExistence type="inferred from homology"/>
<comment type="catalytic activity">
    <reaction evidence="1">
        <text>L-tryptophan + H2O = indole + pyruvate + NH4(+)</text>
        <dbReference type="Rhea" id="RHEA:19553"/>
        <dbReference type="ChEBI" id="CHEBI:15361"/>
        <dbReference type="ChEBI" id="CHEBI:15377"/>
        <dbReference type="ChEBI" id="CHEBI:16881"/>
        <dbReference type="ChEBI" id="CHEBI:28938"/>
        <dbReference type="ChEBI" id="CHEBI:57912"/>
        <dbReference type="EC" id="4.1.99.1"/>
    </reaction>
</comment>
<comment type="cofactor">
    <cofactor evidence="1">
        <name>pyridoxal 5'-phosphate</name>
        <dbReference type="ChEBI" id="CHEBI:597326"/>
    </cofactor>
</comment>
<comment type="pathway">
    <text evidence="1">Amino-acid degradation; L-tryptophan degradation via pyruvate pathway; indole and pyruvate from L-tryptophan: step 1/1.</text>
</comment>
<comment type="subunit">
    <text evidence="1">Homotetramer.</text>
</comment>
<comment type="similarity">
    <text evidence="1">Belongs to the beta-eliminating lyase family.</text>
</comment>
<gene>
    <name evidence="1" type="primary">tnaA</name>
    <name type="ordered locus">SFV_3805</name>
</gene>
<dbReference type="EC" id="4.1.99.1" evidence="1"/>
<dbReference type="EMBL" id="CP000266">
    <property type="protein sequence ID" value="ABF05818.1"/>
    <property type="molecule type" value="Genomic_DNA"/>
</dbReference>
<dbReference type="RefSeq" id="WP_001295247.1">
    <property type="nucleotide sequence ID" value="NC_008258.1"/>
</dbReference>
<dbReference type="SMR" id="Q0SYP7"/>
<dbReference type="GeneID" id="75205423"/>
<dbReference type="KEGG" id="sfv:SFV_3805"/>
<dbReference type="HOGENOM" id="CLU_047223_0_0_6"/>
<dbReference type="UniPathway" id="UPA00332">
    <property type="reaction ID" value="UER00452"/>
</dbReference>
<dbReference type="Proteomes" id="UP000000659">
    <property type="component" value="Chromosome"/>
</dbReference>
<dbReference type="GO" id="GO:0009034">
    <property type="term" value="F:tryptophanase activity"/>
    <property type="evidence" value="ECO:0007669"/>
    <property type="project" value="UniProtKB-UniRule"/>
</dbReference>
<dbReference type="FunFam" id="3.40.640.10:FF:000039">
    <property type="entry name" value="Tryptophanase"/>
    <property type="match status" value="1"/>
</dbReference>
<dbReference type="Gene3D" id="3.90.1150.10">
    <property type="entry name" value="Aspartate Aminotransferase, domain 1"/>
    <property type="match status" value="1"/>
</dbReference>
<dbReference type="Gene3D" id="3.40.640.10">
    <property type="entry name" value="Type I PLP-dependent aspartate aminotransferase-like (Major domain)"/>
    <property type="match status" value="1"/>
</dbReference>
<dbReference type="HAMAP" id="MF_00544">
    <property type="entry name" value="Tryptophanase"/>
    <property type="match status" value="1"/>
</dbReference>
<dbReference type="InterPro" id="IPR001597">
    <property type="entry name" value="ArAA_b-elim_lyase/Thr_aldolase"/>
</dbReference>
<dbReference type="InterPro" id="IPR011166">
    <property type="entry name" value="Beta-eliminating_lyase"/>
</dbReference>
<dbReference type="InterPro" id="IPR015424">
    <property type="entry name" value="PyrdxlP-dep_Trfase"/>
</dbReference>
<dbReference type="InterPro" id="IPR015421">
    <property type="entry name" value="PyrdxlP-dep_Trfase_major"/>
</dbReference>
<dbReference type="InterPro" id="IPR015422">
    <property type="entry name" value="PyrdxlP-dep_Trfase_small"/>
</dbReference>
<dbReference type="InterPro" id="IPR013440">
    <property type="entry name" value="TNase"/>
</dbReference>
<dbReference type="InterPro" id="IPR018176">
    <property type="entry name" value="Tryptophanase_CS"/>
</dbReference>
<dbReference type="NCBIfam" id="NF009709">
    <property type="entry name" value="PRK13238.1"/>
    <property type="match status" value="1"/>
</dbReference>
<dbReference type="NCBIfam" id="TIGR02617">
    <property type="entry name" value="tnaA_trp_ase"/>
    <property type="match status" value="1"/>
</dbReference>
<dbReference type="PANTHER" id="PTHR32325">
    <property type="entry name" value="BETA-ELIMINATING LYASE-LIKE PROTEIN-RELATED"/>
    <property type="match status" value="1"/>
</dbReference>
<dbReference type="PANTHER" id="PTHR32325:SF4">
    <property type="entry name" value="TRYPTOPHANASE"/>
    <property type="match status" value="1"/>
</dbReference>
<dbReference type="Pfam" id="PF01212">
    <property type="entry name" value="Beta_elim_lyase"/>
    <property type="match status" value="1"/>
</dbReference>
<dbReference type="PIRSF" id="PIRSF001386">
    <property type="entry name" value="Trpase"/>
    <property type="match status" value="1"/>
</dbReference>
<dbReference type="SUPFAM" id="SSF53383">
    <property type="entry name" value="PLP-dependent transferases"/>
    <property type="match status" value="1"/>
</dbReference>
<dbReference type="PROSITE" id="PS00853">
    <property type="entry name" value="BETA_ELIM_LYASE"/>
    <property type="match status" value="1"/>
</dbReference>
<accession>Q0SYP7</accession>